<reference key="1">
    <citation type="journal article" date="2008" name="PLoS Genet.">
        <title>Complete genome sequence of the N2-fixing broad host range endophyte Klebsiella pneumoniae 342 and virulence predictions verified in mice.</title>
        <authorList>
            <person name="Fouts D.E."/>
            <person name="Tyler H.L."/>
            <person name="DeBoy R.T."/>
            <person name="Daugherty S."/>
            <person name="Ren Q."/>
            <person name="Badger J.H."/>
            <person name="Durkin A.S."/>
            <person name="Huot H."/>
            <person name="Shrivastava S."/>
            <person name="Kothari S."/>
            <person name="Dodson R.J."/>
            <person name="Mohamoud Y."/>
            <person name="Khouri H."/>
            <person name="Roesch L.F.W."/>
            <person name="Krogfelt K.A."/>
            <person name="Struve C."/>
            <person name="Triplett E.W."/>
            <person name="Methe B.A."/>
        </authorList>
    </citation>
    <scope>NUCLEOTIDE SEQUENCE [LARGE SCALE GENOMIC DNA]</scope>
    <source>
        <strain>342</strain>
    </source>
</reference>
<name>GHRA_KLEP3</name>
<comment type="function">
    <text evidence="1">Catalyzes the NADPH-dependent reduction of glyoxylate and hydroxypyruvate into glycolate and glycerate, respectively.</text>
</comment>
<comment type="catalytic activity">
    <reaction evidence="1">
        <text>glycolate + NADP(+) = glyoxylate + NADPH + H(+)</text>
        <dbReference type="Rhea" id="RHEA:10992"/>
        <dbReference type="ChEBI" id="CHEBI:15378"/>
        <dbReference type="ChEBI" id="CHEBI:29805"/>
        <dbReference type="ChEBI" id="CHEBI:36655"/>
        <dbReference type="ChEBI" id="CHEBI:57783"/>
        <dbReference type="ChEBI" id="CHEBI:58349"/>
        <dbReference type="EC" id="1.1.1.79"/>
    </reaction>
</comment>
<comment type="catalytic activity">
    <reaction evidence="1">
        <text>(R)-glycerate + NAD(+) = 3-hydroxypyruvate + NADH + H(+)</text>
        <dbReference type="Rhea" id="RHEA:17905"/>
        <dbReference type="ChEBI" id="CHEBI:15378"/>
        <dbReference type="ChEBI" id="CHEBI:16659"/>
        <dbReference type="ChEBI" id="CHEBI:17180"/>
        <dbReference type="ChEBI" id="CHEBI:57540"/>
        <dbReference type="ChEBI" id="CHEBI:57945"/>
        <dbReference type="EC" id="1.1.1.81"/>
    </reaction>
</comment>
<comment type="catalytic activity">
    <reaction evidence="1">
        <text>(R)-glycerate + NADP(+) = 3-hydroxypyruvate + NADPH + H(+)</text>
        <dbReference type="Rhea" id="RHEA:18657"/>
        <dbReference type="ChEBI" id="CHEBI:15378"/>
        <dbReference type="ChEBI" id="CHEBI:16659"/>
        <dbReference type="ChEBI" id="CHEBI:17180"/>
        <dbReference type="ChEBI" id="CHEBI:57783"/>
        <dbReference type="ChEBI" id="CHEBI:58349"/>
        <dbReference type="EC" id="1.1.1.81"/>
    </reaction>
</comment>
<comment type="subcellular location">
    <subcellularLocation>
        <location evidence="1">Cytoplasm</location>
    </subcellularLocation>
</comment>
<comment type="similarity">
    <text evidence="1">Belongs to the D-isomer specific 2-hydroxyacid dehydrogenase family. GhrA subfamily.</text>
</comment>
<feature type="chain" id="PRO_1000187272" description="Glyoxylate/hydroxypyruvate reductase A">
    <location>
        <begin position="1"/>
        <end position="312"/>
    </location>
</feature>
<feature type="active site" evidence="1">
    <location>
        <position position="227"/>
    </location>
</feature>
<feature type="active site" description="Proton donor" evidence="1">
    <location>
        <position position="275"/>
    </location>
</feature>
<evidence type="ECO:0000255" key="1">
    <source>
        <dbReference type="HAMAP-Rule" id="MF_01666"/>
    </source>
</evidence>
<dbReference type="EC" id="1.1.1.79" evidence="1"/>
<dbReference type="EC" id="1.1.1.81" evidence="1"/>
<dbReference type="EMBL" id="CP000964">
    <property type="protein sequence ID" value="ACI10654.1"/>
    <property type="molecule type" value="Genomic_DNA"/>
</dbReference>
<dbReference type="SMR" id="B5XXL3"/>
<dbReference type="KEGG" id="kpe:KPK_3501"/>
<dbReference type="HOGENOM" id="CLU_019796_1_0_6"/>
<dbReference type="Proteomes" id="UP000001734">
    <property type="component" value="Chromosome"/>
</dbReference>
<dbReference type="GO" id="GO:0005737">
    <property type="term" value="C:cytoplasm"/>
    <property type="evidence" value="ECO:0007669"/>
    <property type="project" value="UniProtKB-SubCell"/>
</dbReference>
<dbReference type="GO" id="GO:0030267">
    <property type="term" value="F:glyoxylate reductase (NADPH) activity"/>
    <property type="evidence" value="ECO:0007669"/>
    <property type="project" value="UniProtKB-UniRule"/>
</dbReference>
<dbReference type="GO" id="GO:0008465">
    <property type="term" value="F:hydroxypyruvate reductase (NADH) activity"/>
    <property type="evidence" value="ECO:0007669"/>
    <property type="project" value="RHEA"/>
</dbReference>
<dbReference type="GO" id="GO:0120509">
    <property type="term" value="F:hydroxypyruvate reductase (NADPH) activity"/>
    <property type="evidence" value="ECO:0007669"/>
    <property type="project" value="RHEA"/>
</dbReference>
<dbReference type="GO" id="GO:0051287">
    <property type="term" value="F:NAD binding"/>
    <property type="evidence" value="ECO:0007669"/>
    <property type="project" value="InterPro"/>
</dbReference>
<dbReference type="CDD" id="cd12164">
    <property type="entry name" value="GDH_like_2"/>
    <property type="match status" value="1"/>
</dbReference>
<dbReference type="FunFam" id="3.40.50.720:FF:000110">
    <property type="entry name" value="Glyoxylate/hydroxypyruvate reductase A"/>
    <property type="match status" value="1"/>
</dbReference>
<dbReference type="Gene3D" id="3.40.50.720">
    <property type="entry name" value="NAD(P)-binding Rossmann-like Domain"/>
    <property type="match status" value="2"/>
</dbReference>
<dbReference type="HAMAP" id="MF_01666">
    <property type="entry name" value="2_Hacid_dh_C_GhrA"/>
    <property type="match status" value="1"/>
</dbReference>
<dbReference type="InterPro" id="IPR006140">
    <property type="entry name" value="D-isomer_DH_NAD-bd"/>
</dbReference>
<dbReference type="InterPro" id="IPR023514">
    <property type="entry name" value="GhrA_Enterobacterales"/>
</dbReference>
<dbReference type="InterPro" id="IPR036291">
    <property type="entry name" value="NAD(P)-bd_dom_sf"/>
</dbReference>
<dbReference type="NCBIfam" id="NF012013">
    <property type="entry name" value="PRK15469.1"/>
    <property type="match status" value="1"/>
</dbReference>
<dbReference type="PANTHER" id="PTHR43333">
    <property type="entry name" value="2-HACID_DH_C DOMAIN-CONTAINING PROTEIN"/>
    <property type="match status" value="1"/>
</dbReference>
<dbReference type="PANTHER" id="PTHR43333:SF1">
    <property type="entry name" value="D-ISOMER SPECIFIC 2-HYDROXYACID DEHYDROGENASE NAD-BINDING DOMAIN-CONTAINING PROTEIN"/>
    <property type="match status" value="1"/>
</dbReference>
<dbReference type="Pfam" id="PF02826">
    <property type="entry name" value="2-Hacid_dh_C"/>
    <property type="match status" value="1"/>
</dbReference>
<dbReference type="SUPFAM" id="SSF51735">
    <property type="entry name" value="NAD(P)-binding Rossmann-fold domains"/>
    <property type="match status" value="1"/>
</dbReference>
<organism>
    <name type="scientific">Klebsiella pneumoniae (strain 342)</name>
    <dbReference type="NCBI Taxonomy" id="507522"/>
    <lineage>
        <taxon>Bacteria</taxon>
        <taxon>Pseudomonadati</taxon>
        <taxon>Pseudomonadota</taxon>
        <taxon>Gammaproteobacteria</taxon>
        <taxon>Enterobacterales</taxon>
        <taxon>Enterobacteriaceae</taxon>
        <taxon>Klebsiella/Raoultella group</taxon>
        <taxon>Klebsiella</taxon>
        <taxon>Klebsiella pneumoniae complex</taxon>
    </lineage>
</organism>
<accession>B5XXL3</accession>
<gene>
    <name evidence="1" type="primary">ghrA</name>
    <name type="ordered locus">KPK_3501</name>
</gene>
<proteinExistence type="inferred from homology"/>
<protein>
    <recommendedName>
        <fullName evidence="1">Glyoxylate/hydroxypyruvate reductase A</fullName>
        <ecNumber evidence="1">1.1.1.79</ecNumber>
        <ecNumber evidence="1">1.1.1.81</ecNumber>
    </recommendedName>
    <alternativeName>
        <fullName evidence="1">2-ketoacid reductase</fullName>
    </alternativeName>
</protein>
<keyword id="KW-0963">Cytoplasm</keyword>
<keyword id="KW-0520">NAD</keyword>
<keyword id="KW-0521">NADP</keyword>
<keyword id="KW-0560">Oxidoreductase</keyword>
<sequence>MEIIFYHQTFDTPFWIRELEKQLPGARVREWKAGDNQPADYALVWHPPVEMLQGRALKAVFALGAGVDSILSKLRDHPDMLPLSIPLFRLEDTGMGRQMQEYAVSQVLHWFRRFDDYQALKLASRWQPLPEYRADEFTVGIMGAGVLGAKVAESLQPWGFPLRVWSRSRKSWPQVQSFAGQAELGEFLQGTRVLINLLPNTAETAGIINQTLLAQLPDESYVLNLARGVHVVEEDLLAALNSGKLKGAMLDVFSREPLPQESPLWAHPRVAMTPHVAAVTRPMEAITYIAETISRLERGEPVSGQVDRQRGY</sequence>